<sequence>MISLTPSLFLNKTVVPGCSTRLSLRQPRTIITPPASLRVFSSLGSNQDPTGSVLIETTATSSSSLETSAADIVPKSTVSGGVQDVYGEDAATEDMPITPWSLSVASGYTLLRDPHHNKGLAFSHRERDAHYLRGLLPPTVISQDLQVKKIMHTLRQYQVPLQKYMAMMDLQETNERLFYKLLIDHVEELLPVIYTPTVGEACQKYGSIFLRPQGLFISLKEKGKIHEVLRNWPEKNIQVIVVTDGERILGLGDLGCQGMGIPVGKLSLYTALGGVRPSACLPVTIDVGTNNEKLLNDEFYIGLRQRRATGEEYSELMHEFMTAVKQNYGEKVVIQFEDFANHNAFDLLAKYGTTHLVFNDDIQGTASVVLAGLIAALRFVGGSLSDHRFLFLGAGEAGTGIAELIALEISKKSHIPLEEARKNIWLVDSKGLIVSSRKESIQHFKKPWAHDHEPIRELVDAVKAIKPTVLIGTSGVGQTFTQDVVETMAKLNEKPIILSLSNPTSQSECTAEEAYTWSQGRAIFASGSPFAPVEYEGKTFVPGQANNAYIFPGFGLGLIMSGTIRVHDDMLLAASEALAEELMEEHYEKGMIYPPFRNIRKISARIAAKVAAKAYELGLATRLPQPKELEQCAESSMYSPSYRSYR</sequence>
<reference key="1">
    <citation type="journal article" date="2000" name="Nature">
        <title>Sequence and analysis of chromosome 1 of the plant Arabidopsis thaliana.</title>
        <authorList>
            <person name="Theologis A."/>
            <person name="Ecker J.R."/>
            <person name="Palm C.J."/>
            <person name="Federspiel N.A."/>
            <person name="Kaul S."/>
            <person name="White O."/>
            <person name="Alonso J."/>
            <person name="Altafi H."/>
            <person name="Araujo R."/>
            <person name="Bowman C.L."/>
            <person name="Brooks S.Y."/>
            <person name="Buehler E."/>
            <person name="Chan A."/>
            <person name="Chao Q."/>
            <person name="Chen H."/>
            <person name="Cheuk R.F."/>
            <person name="Chin C.W."/>
            <person name="Chung M.K."/>
            <person name="Conn L."/>
            <person name="Conway A.B."/>
            <person name="Conway A.R."/>
            <person name="Creasy T.H."/>
            <person name="Dewar K."/>
            <person name="Dunn P."/>
            <person name="Etgu P."/>
            <person name="Feldblyum T.V."/>
            <person name="Feng J.-D."/>
            <person name="Fong B."/>
            <person name="Fujii C.Y."/>
            <person name="Gill J.E."/>
            <person name="Goldsmith A.D."/>
            <person name="Haas B."/>
            <person name="Hansen N.F."/>
            <person name="Hughes B."/>
            <person name="Huizar L."/>
            <person name="Hunter J.L."/>
            <person name="Jenkins J."/>
            <person name="Johnson-Hopson C."/>
            <person name="Khan S."/>
            <person name="Khaykin E."/>
            <person name="Kim C.J."/>
            <person name="Koo H.L."/>
            <person name="Kremenetskaia I."/>
            <person name="Kurtz D.B."/>
            <person name="Kwan A."/>
            <person name="Lam B."/>
            <person name="Langin-Hooper S."/>
            <person name="Lee A."/>
            <person name="Lee J.M."/>
            <person name="Lenz C.A."/>
            <person name="Li J.H."/>
            <person name="Li Y.-P."/>
            <person name="Lin X."/>
            <person name="Liu S.X."/>
            <person name="Liu Z.A."/>
            <person name="Luros J.S."/>
            <person name="Maiti R."/>
            <person name="Marziali A."/>
            <person name="Militscher J."/>
            <person name="Miranda M."/>
            <person name="Nguyen M."/>
            <person name="Nierman W.C."/>
            <person name="Osborne B.I."/>
            <person name="Pai G."/>
            <person name="Peterson J."/>
            <person name="Pham P.K."/>
            <person name="Rizzo M."/>
            <person name="Rooney T."/>
            <person name="Rowley D."/>
            <person name="Sakano H."/>
            <person name="Salzberg S.L."/>
            <person name="Schwartz J.R."/>
            <person name="Shinn P."/>
            <person name="Southwick A.M."/>
            <person name="Sun H."/>
            <person name="Tallon L.J."/>
            <person name="Tambunga G."/>
            <person name="Toriumi M.J."/>
            <person name="Town C.D."/>
            <person name="Utterback T."/>
            <person name="Van Aken S."/>
            <person name="Vaysberg M."/>
            <person name="Vysotskaia V.S."/>
            <person name="Walker M."/>
            <person name="Wu D."/>
            <person name="Yu G."/>
            <person name="Fraser C.M."/>
            <person name="Venter J.C."/>
            <person name="Davis R.W."/>
        </authorList>
    </citation>
    <scope>NUCLEOTIDE SEQUENCE [LARGE SCALE GENOMIC DNA]</scope>
    <source>
        <strain>cv. Columbia</strain>
    </source>
</reference>
<reference key="2">
    <citation type="journal article" date="2017" name="Plant J.">
        <title>Araport11: a complete reannotation of the Arabidopsis thaliana reference genome.</title>
        <authorList>
            <person name="Cheng C.Y."/>
            <person name="Krishnakumar V."/>
            <person name="Chan A.P."/>
            <person name="Thibaud-Nissen F."/>
            <person name="Schobel S."/>
            <person name="Town C.D."/>
        </authorList>
    </citation>
    <scope>GENOME REANNOTATION</scope>
    <source>
        <strain>cv. Columbia</strain>
    </source>
</reference>
<reference key="3">
    <citation type="journal article" date="2003" name="Science">
        <title>Empirical analysis of transcriptional activity in the Arabidopsis genome.</title>
        <authorList>
            <person name="Yamada K."/>
            <person name="Lim J."/>
            <person name="Dale J.M."/>
            <person name="Chen H."/>
            <person name="Shinn P."/>
            <person name="Palm C.J."/>
            <person name="Southwick A.M."/>
            <person name="Wu H.C."/>
            <person name="Kim C.J."/>
            <person name="Nguyen M."/>
            <person name="Pham P.K."/>
            <person name="Cheuk R.F."/>
            <person name="Karlin-Newmann G."/>
            <person name="Liu S.X."/>
            <person name="Lam B."/>
            <person name="Sakano H."/>
            <person name="Wu T."/>
            <person name="Yu G."/>
            <person name="Miranda M."/>
            <person name="Quach H.L."/>
            <person name="Tripp M."/>
            <person name="Chang C.H."/>
            <person name="Lee J.M."/>
            <person name="Toriumi M.J."/>
            <person name="Chan M.M."/>
            <person name="Tang C.C."/>
            <person name="Onodera C.S."/>
            <person name="Deng J.M."/>
            <person name="Akiyama K."/>
            <person name="Ansari Y."/>
            <person name="Arakawa T."/>
            <person name="Banh J."/>
            <person name="Banno F."/>
            <person name="Bowser L."/>
            <person name="Brooks S.Y."/>
            <person name="Carninci P."/>
            <person name="Chao Q."/>
            <person name="Choy N."/>
            <person name="Enju A."/>
            <person name="Goldsmith A.D."/>
            <person name="Gurjal M."/>
            <person name="Hansen N.F."/>
            <person name="Hayashizaki Y."/>
            <person name="Johnson-Hopson C."/>
            <person name="Hsuan V.W."/>
            <person name="Iida K."/>
            <person name="Karnes M."/>
            <person name="Khan S."/>
            <person name="Koesema E."/>
            <person name="Ishida J."/>
            <person name="Jiang P.X."/>
            <person name="Jones T."/>
            <person name="Kawai J."/>
            <person name="Kamiya A."/>
            <person name="Meyers C."/>
            <person name="Nakajima M."/>
            <person name="Narusaka M."/>
            <person name="Seki M."/>
            <person name="Sakurai T."/>
            <person name="Satou M."/>
            <person name="Tamse R."/>
            <person name="Vaysberg M."/>
            <person name="Wallender E.K."/>
            <person name="Wong C."/>
            <person name="Yamamura Y."/>
            <person name="Yuan S."/>
            <person name="Shinozaki K."/>
            <person name="Davis R.W."/>
            <person name="Theologis A."/>
            <person name="Ecker J.R."/>
        </authorList>
    </citation>
    <scope>NUCLEOTIDE SEQUENCE [LARGE SCALE MRNA]</scope>
    <source>
        <strain>cv. Columbia</strain>
    </source>
</reference>
<reference key="4">
    <citation type="submission" date="2005-03" db="EMBL/GenBank/DDBJ databases">
        <title>Large-scale analysis of RIKEN Arabidopsis full-length (RAFL) cDNAs.</title>
        <authorList>
            <person name="Totoki Y."/>
            <person name="Seki M."/>
            <person name="Ishida J."/>
            <person name="Nakajima M."/>
            <person name="Enju A."/>
            <person name="Kamiya A."/>
            <person name="Narusaka M."/>
            <person name="Shin-i T."/>
            <person name="Nakagawa M."/>
            <person name="Sakamoto N."/>
            <person name="Oishi K."/>
            <person name="Kohara Y."/>
            <person name="Kobayashi M."/>
            <person name="Toyoda A."/>
            <person name="Sakaki Y."/>
            <person name="Sakurai T."/>
            <person name="Iida K."/>
            <person name="Akiyama K."/>
            <person name="Satou M."/>
            <person name="Toyoda T."/>
            <person name="Konagaya A."/>
            <person name="Carninci P."/>
            <person name="Kawai J."/>
            <person name="Hayashizaki Y."/>
            <person name="Shinozaki K."/>
        </authorList>
    </citation>
    <scope>NUCLEOTIDE SEQUENCE [LARGE SCALE MRNA] OF 473-646</scope>
    <source>
        <strain>cv. Columbia</strain>
    </source>
</reference>
<reference key="5">
    <citation type="journal article" date="2005" name="Plant Physiol.">
        <title>A comprehensive analysis of the NADP-malic enzyme gene family of Arabidopsis.</title>
        <authorList>
            <person name="Wheeler M.C."/>
            <person name="Tronconi M.A."/>
            <person name="Drincovich M.F."/>
            <person name="Andreo C.S."/>
            <person name="Fluegge U.-I."/>
            <person name="Maurino V.G."/>
        </authorList>
    </citation>
    <scope>DEVELOPMENTAL STAGE</scope>
    <scope>TISSUE SPECIFICITY</scope>
    <scope>CATALYTIC ACTIVITY</scope>
    <scope>BIOPHYSICOCHEMICAL PROPERTIES</scope>
    <scope>SUBUNIT</scope>
    <scope>SUBCELLULAR LOCATION</scope>
    <scope>GENE FAMILY</scope>
    <scope>NOMENCLATURE</scope>
    <source>
        <strain>cv. Columbia</strain>
    </source>
</reference>
<reference key="6">
    <citation type="journal article" date="2011" name="Plant Physiol.">
        <title>Defining the protein complex proteome of plant mitochondria.</title>
        <authorList>
            <person name="Klodmann J."/>
            <person name="Senkler M."/>
            <person name="Rode C."/>
            <person name="Braun H.-P."/>
        </authorList>
    </citation>
    <scope>IDENTIFICATION BY MASS SPECTROMETRY</scope>
    <scope>SUBCELLULAR LOCATION [LARGE SCALE ANALYSIS]</scope>
</reference>
<feature type="transit peptide" description="Chloroplast" evidence="2">
    <location>
        <begin position="1"/>
        <end position="74"/>
    </location>
</feature>
<feature type="chain" id="PRO_0000420152" description="NADP-dependent malic enzyme 4, chloroplastic">
    <location>
        <begin position="75"/>
        <end position="646"/>
    </location>
</feature>
<feature type="active site" description="Proton donor" evidence="1">
    <location>
        <position position="194"/>
    </location>
</feature>
<feature type="active site" description="Proton acceptor" evidence="1">
    <location>
        <position position="265"/>
    </location>
</feature>
<feature type="binding site" evidence="1">
    <location>
        <position position="247"/>
    </location>
    <ligand>
        <name>NADP(+)</name>
        <dbReference type="ChEBI" id="CHEBI:58349"/>
    </ligand>
</feature>
<feature type="binding site" evidence="1">
    <location>
        <position position="337"/>
    </location>
    <ligand>
        <name>a divalent metal cation</name>
        <dbReference type="ChEBI" id="CHEBI:60240"/>
    </ligand>
</feature>
<feature type="binding site" evidence="1">
    <location>
        <position position="338"/>
    </location>
    <ligand>
        <name>a divalent metal cation</name>
        <dbReference type="ChEBI" id="CHEBI:60240"/>
    </ligand>
</feature>
<feature type="binding site" evidence="1">
    <location>
        <position position="361"/>
    </location>
    <ligand>
        <name>a divalent metal cation</name>
        <dbReference type="ChEBI" id="CHEBI:60240"/>
    </ligand>
</feature>
<feature type="binding site" evidence="1">
    <location>
        <position position="361"/>
    </location>
    <ligand>
        <name>NADP(+)</name>
        <dbReference type="ChEBI" id="CHEBI:58349"/>
    </ligand>
</feature>
<feature type="binding site" evidence="1">
    <location>
        <begin position="390"/>
        <end position="406"/>
    </location>
    <ligand>
        <name>NADP(+)</name>
        <dbReference type="ChEBI" id="CHEBI:58349"/>
    </ligand>
</feature>
<feature type="binding site" evidence="1">
    <location>
        <position position="502"/>
    </location>
    <ligand>
        <name>NADP(+)</name>
        <dbReference type="ChEBI" id="CHEBI:58349"/>
    </ligand>
</feature>
<feature type="site" description="Important for activity" evidence="1">
    <location>
        <position position="361"/>
    </location>
</feature>
<protein>
    <recommendedName>
        <fullName>NADP-dependent malic enzyme 4, chloroplastic</fullName>
        <shortName>AtNADP-ME4</shortName>
        <shortName>NADP-malic enzyme 4</shortName>
        <ecNumber>1.1.1.40</ecNumber>
    </recommendedName>
</protein>
<name>MAOP4_ARATH</name>
<proteinExistence type="evidence at protein level"/>
<comment type="function">
    <text evidence="1">The chloroplastic ME isoform decarboxylates malate shuttled from neighboring mesophyll cells. The CO(2) released is then refixed by ribulose-bisphosphate carboxylase. This pathway eliminates the photorespiratory loss of CO(2) that occurs in most plants (By similarity).</text>
</comment>
<comment type="catalytic activity">
    <reaction evidence="3">
        <text>(S)-malate + NADP(+) = pyruvate + CO2 + NADPH</text>
        <dbReference type="Rhea" id="RHEA:18253"/>
        <dbReference type="ChEBI" id="CHEBI:15361"/>
        <dbReference type="ChEBI" id="CHEBI:15589"/>
        <dbReference type="ChEBI" id="CHEBI:16526"/>
        <dbReference type="ChEBI" id="CHEBI:57783"/>
        <dbReference type="ChEBI" id="CHEBI:58349"/>
        <dbReference type="EC" id="1.1.1.40"/>
    </reaction>
</comment>
<comment type="catalytic activity">
    <reaction evidence="3">
        <text>oxaloacetate + H(+) = pyruvate + CO2</text>
        <dbReference type="Rhea" id="RHEA:15641"/>
        <dbReference type="ChEBI" id="CHEBI:15361"/>
        <dbReference type="ChEBI" id="CHEBI:15378"/>
        <dbReference type="ChEBI" id="CHEBI:16452"/>
        <dbReference type="ChEBI" id="CHEBI:16526"/>
        <dbReference type="EC" id="1.1.1.40"/>
    </reaction>
</comment>
<comment type="cofactor">
    <cofactor evidence="1">
        <name>Mg(2+)</name>
        <dbReference type="ChEBI" id="CHEBI:18420"/>
    </cofactor>
    <cofactor evidence="1">
        <name>Mn(2+)</name>
        <dbReference type="ChEBI" id="CHEBI:29035"/>
    </cofactor>
    <text evidence="1">Divalent metal cations. Prefers magnesium or manganese.</text>
</comment>
<comment type="biophysicochemical properties">
    <kinetics>
        <KM evidence="3">10.2 uM for NADP (at pH 7.5)</KM>
        <KM evidence="3">0.23 mM for malate (at pH 7.5)</KM>
        <text>kcat is 151.3 sec(-1) with NADP as substrate (at pH 7.5).</text>
    </kinetics>
</comment>
<comment type="pathway">
    <text>Photosynthesis; C3 acid pathway.</text>
</comment>
<comment type="subunit">
    <text evidence="3">Homodimer and homotetramer.</text>
</comment>
<comment type="subcellular location">
    <subcellularLocation>
        <location evidence="3 4">Plastid</location>
        <location evidence="3 4">Chloroplast</location>
    </subcellularLocation>
</comment>
<comment type="tissue specificity">
    <text evidence="3">Expressed in leaves, stems, flowers and roots, mainly in vascular system. In roots, present in the stele, including the vascular tissue and the pericycle, mainly at emerging lateral roots and at root tips.</text>
</comment>
<comment type="developmental stage">
    <text evidence="3">During embryogenesis, present in the endosperm and the embryo at all developmental stages, including the seed attachment point and the integuments. Also detected in siliques. During germination, first confined to the radicle to later approaches the meristematic region. Finally present in the whole root. Expressed in cotyledons and primary leaves. In opened flowers, present in sepals, stigma, filaments, and pollen.</text>
</comment>
<comment type="similarity">
    <text evidence="5">Belongs to the malic enzymes family.</text>
</comment>
<comment type="sequence caution" evidence="5">
    <conflict type="erroneous gene model prediction">
        <sequence resource="EMBL-CDS" id="AAF68116"/>
    </conflict>
</comment>
<comment type="sequence caution" evidence="5">
    <conflict type="erroneous initiation">
        <sequence resource="EMBL-CDS" id="BAD94826"/>
    </conflict>
    <text>Truncated N-terminus.</text>
</comment>
<keyword id="KW-0150">Chloroplast</keyword>
<keyword id="KW-0479">Metal-binding</keyword>
<keyword id="KW-0521">NADP</keyword>
<keyword id="KW-0560">Oxidoreductase</keyword>
<keyword id="KW-0934">Plastid</keyword>
<keyword id="KW-1185">Reference proteome</keyword>
<keyword id="KW-0809">Transit peptide</keyword>
<organism>
    <name type="scientific">Arabidopsis thaliana</name>
    <name type="common">Mouse-ear cress</name>
    <dbReference type="NCBI Taxonomy" id="3702"/>
    <lineage>
        <taxon>Eukaryota</taxon>
        <taxon>Viridiplantae</taxon>
        <taxon>Streptophyta</taxon>
        <taxon>Embryophyta</taxon>
        <taxon>Tracheophyta</taxon>
        <taxon>Spermatophyta</taxon>
        <taxon>Magnoliopsida</taxon>
        <taxon>eudicotyledons</taxon>
        <taxon>Gunneridae</taxon>
        <taxon>Pentapetalae</taxon>
        <taxon>rosids</taxon>
        <taxon>malvids</taxon>
        <taxon>Brassicales</taxon>
        <taxon>Brassicaceae</taxon>
        <taxon>Camelineae</taxon>
        <taxon>Arabidopsis</taxon>
    </lineage>
</organism>
<evidence type="ECO:0000250" key="1"/>
<evidence type="ECO:0000255" key="2"/>
<evidence type="ECO:0000269" key="3">
    <source>
    </source>
</evidence>
<evidence type="ECO:0000269" key="4">
    <source>
    </source>
</evidence>
<evidence type="ECO:0000305" key="5"/>
<dbReference type="EC" id="1.1.1.40"/>
<dbReference type="EMBL" id="AC010793">
    <property type="protein sequence ID" value="AAF68116.1"/>
    <property type="status" value="ALT_SEQ"/>
    <property type="molecule type" value="Genomic_DNA"/>
</dbReference>
<dbReference type="EMBL" id="AC011717">
    <property type="protein sequence ID" value="AAG52235.1"/>
    <property type="molecule type" value="Genomic_DNA"/>
</dbReference>
<dbReference type="EMBL" id="CP002684">
    <property type="protein sequence ID" value="AEE36294.1"/>
    <property type="molecule type" value="Genomic_DNA"/>
</dbReference>
<dbReference type="EMBL" id="AY060584">
    <property type="protein sequence ID" value="AAL31209.1"/>
    <property type="molecule type" value="mRNA"/>
</dbReference>
<dbReference type="EMBL" id="AY142064">
    <property type="protein sequence ID" value="AAM98328.1"/>
    <property type="molecule type" value="mRNA"/>
</dbReference>
<dbReference type="EMBL" id="AK222053">
    <property type="protein sequence ID" value="BAD94826.1"/>
    <property type="status" value="ALT_INIT"/>
    <property type="molecule type" value="mRNA"/>
</dbReference>
<dbReference type="PIR" id="E96828">
    <property type="entry name" value="E96828"/>
</dbReference>
<dbReference type="RefSeq" id="NP_178093.1">
    <property type="nucleotide sequence ID" value="NM_106624.5"/>
</dbReference>
<dbReference type="SMR" id="Q9CA83"/>
<dbReference type="BioGRID" id="29532">
    <property type="interactions" value="3"/>
</dbReference>
<dbReference type="FunCoup" id="Q9CA83">
    <property type="interactions" value="3985"/>
</dbReference>
<dbReference type="IntAct" id="Q9CA83">
    <property type="interactions" value="2"/>
</dbReference>
<dbReference type="STRING" id="3702.Q9CA83"/>
<dbReference type="GlyGen" id="Q9CA83">
    <property type="glycosylation" value="1 site"/>
</dbReference>
<dbReference type="iPTMnet" id="Q9CA83"/>
<dbReference type="PaxDb" id="3702-AT1G79750.1"/>
<dbReference type="ProteomicsDB" id="232210"/>
<dbReference type="EnsemblPlants" id="AT1G79750.1">
    <property type="protein sequence ID" value="AT1G79750.1"/>
    <property type="gene ID" value="AT1G79750"/>
</dbReference>
<dbReference type="GeneID" id="844314"/>
<dbReference type="Gramene" id="AT1G79750.1">
    <property type="protein sequence ID" value="AT1G79750.1"/>
    <property type="gene ID" value="AT1G79750"/>
</dbReference>
<dbReference type="KEGG" id="ath:AT1G79750"/>
<dbReference type="Araport" id="AT1G79750"/>
<dbReference type="TAIR" id="AT1G79750">
    <property type="gene designation" value="NADP-ME4"/>
</dbReference>
<dbReference type="eggNOG" id="KOG1257">
    <property type="taxonomic scope" value="Eukaryota"/>
</dbReference>
<dbReference type="HOGENOM" id="CLU_011405_5_2_1"/>
<dbReference type="InParanoid" id="Q9CA83"/>
<dbReference type="OMA" id="MAFQYLT"/>
<dbReference type="PhylomeDB" id="Q9CA83"/>
<dbReference type="BioCyc" id="ARA:AT1G79750-MONOMER"/>
<dbReference type="SABIO-RK" id="Q9CA83"/>
<dbReference type="UniPathway" id="UPA00321"/>
<dbReference type="PRO" id="PR:Q9CA83"/>
<dbReference type="Proteomes" id="UP000006548">
    <property type="component" value="Chromosome 1"/>
</dbReference>
<dbReference type="ExpressionAtlas" id="Q9CA83">
    <property type="expression patterns" value="baseline and differential"/>
</dbReference>
<dbReference type="GO" id="GO:0009507">
    <property type="term" value="C:chloroplast"/>
    <property type="evidence" value="ECO:0000314"/>
    <property type="project" value="TAIR"/>
</dbReference>
<dbReference type="GO" id="GO:0005739">
    <property type="term" value="C:mitochondrion"/>
    <property type="evidence" value="ECO:0007005"/>
    <property type="project" value="TAIR"/>
</dbReference>
<dbReference type="GO" id="GO:0050897">
    <property type="term" value="F:cobalt ion binding"/>
    <property type="evidence" value="ECO:0007005"/>
    <property type="project" value="TAIR"/>
</dbReference>
<dbReference type="GO" id="GO:0004473">
    <property type="term" value="F:malate dehydrogenase (decarboxylating) (NADP+) activity"/>
    <property type="evidence" value="ECO:0000314"/>
    <property type="project" value="TAIR"/>
</dbReference>
<dbReference type="GO" id="GO:0051287">
    <property type="term" value="F:NAD binding"/>
    <property type="evidence" value="ECO:0007669"/>
    <property type="project" value="InterPro"/>
</dbReference>
<dbReference type="GO" id="GO:0008948">
    <property type="term" value="F:oxaloacetate decarboxylase activity"/>
    <property type="evidence" value="ECO:0007669"/>
    <property type="project" value="RHEA"/>
</dbReference>
<dbReference type="GO" id="GO:0008270">
    <property type="term" value="F:zinc ion binding"/>
    <property type="evidence" value="ECO:0007005"/>
    <property type="project" value="TAIR"/>
</dbReference>
<dbReference type="GO" id="GO:0006633">
    <property type="term" value="P:fatty acid biosynthetic process"/>
    <property type="evidence" value="ECO:0000304"/>
    <property type="project" value="TAIR"/>
</dbReference>
<dbReference type="GO" id="GO:0006108">
    <property type="term" value="P:malate metabolic process"/>
    <property type="evidence" value="ECO:0000314"/>
    <property type="project" value="TAIR"/>
</dbReference>
<dbReference type="CDD" id="cd05312">
    <property type="entry name" value="NAD_bind_1_malic_enz"/>
    <property type="match status" value="1"/>
</dbReference>
<dbReference type="FunFam" id="3.40.50.10380:FF:000002">
    <property type="entry name" value="Malic enzyme"/>
    <property type="match status" value="1"/>
</dbReference>
<dbReference type="FunFam" id="3.40.50.720:FF:000067">
    <property type="entry name" value="Malic enzyme"/>
    <property type="match status" value="1"/>
</dbReference>
<dbReference type="Gene3D" id="3.40.50.10380">
    <property type="entry name" value="Malic enzyme, N-terminal domain"/>
    <property type="match status" value="1"/>
</dbReference>
<dbReference type="Gene3D" id="3.40.50.720">
    <property type="entry name" value="NAD(P)-binding Rossmann-like Domain"/>
    <property type="match status" value="1"/>
</dbReference>
<dbReference type="InterPro" id="IPR046346">
    <property type="entry name" value="Aminoacid_DH-like_N_sf"/>
</dbReference>
<dbReference type="InterPro" id="IPR015884">
    <property type="entry name" value="Malic_enzyme_CS"/>
</dbReference>
<dbReference type="InterPro" id="IPR012301">
    <property type="entry name" value="Malic_N_dom"/>
</dbReference>
<dbReference type="InterPro" id="IPR037062">
    <property type="entry name" value="Malic_N_dom_sf"/>
</dbReference>
<dbReference type="InterPro" id="IPR012302">
    <property type="entry name" value="Malic_NAD-bd"/>
</dbReference>
<dbReference type="InterPro" id="IPR001891">
    <property type="entry name" value="Malic_OxRdtase"/>
</dbReference>
<dbReference type="InterPro" id="IPR036291">
    <property type="entry name" value="NAD(P)-bd_dom_sf"/>
</dbReference>
<dbReference type="NCBIfam" id="NF010052">
    <property type="entry name" value="PRK13529.1"/>
    <property type="match status" value="1"/>
</dbReference>
<dbReference type="PANTHER" id="PTHR23406">
    <property type="entry name" value="MALIC ENZYME-RELATED"/>
    <property type="match status" value="1"/>
</dbReference>
<dbReference type="PANTHER" id="PTHR23406:SF76">
    <property type="entry name" value="NADP-DEPENDENT MALIC ENZYME 4, CHLOROPLASTIC"/>
    <property type="match status" value="1"/>
</dbReference>
<dbReference type="Pfam" id="PF00390">
    <property type="entry name" value="malic"/>
    <property type="match status" value="1"/>
</dbReference>
<dbReference type="Pfam" id="PF03949">
    <property type="entry name" value="Malic_M"/>
    <property type="match status" value="1"/>
</dbReference>
<dbReference type="PIRSF" id="PIRSF000106">
    <property type="entry name" value="ME"/>
    <property type="match status" value="1"/>
</dbReference>
<dbReference type="PRINTS" id="PR00072">
    <property type="entry name" value="MALOXRDTASE"/>
</dbReference>
<dbReference type="SMART" id="SM01274">
    <property type="entry name" value="malic"/>
    <property type="match status" value="1"/>
</dbReference>
<dbReference type="SMART" id="SM00919">
    <property type="entry name" value="Malic_M"/>
    <property type="match status" value="1"/>
</dbReference>
<dbReference type="SUPFAM" id="SSF53223">
    <property type="entry name" value="Aminoacid dehydrogenase-like, N-terminal domain"/>
    <property type="match status" value="1"/>
</dbReference>
<dbReference type="SUPFAM" id="SSF51735">
    <property type="entry name" value="NAD(P)-binding Rossmann-fold domains"/>
    <property type="match status" value="1"/>
</dbReference>
<dbReference type="PROSITE" id="PS00331">
    <property type="entry name" value="MALIC_ENZYMES"/>
    <property type="match status" value="1"/>
</dbReference>
<accession>Q9CA83</accession>
<accession>Q56WI7</accession>
<accession>Q9MA03</accession>
<gene>
    <name type="primary">NADP-ME4</name>
    <name type="ordered locus">At1g79750</name>
    <name type="ORF">F19K16.27</name>
</gene>